<sequence length="237" mass="27319">MTPEVFYKALEDFDIHLNDFQKEQFDIYFQTLVEWNDKINLTAITEKNDVYLKHFYDSIAPILHGYIKNEPIKLLDIGAGAGFPSIPMKIIYPQLDITIIDSLNKRITFLKQLSEVLHLEGVHFFHGRAEDFGQDINFRAQFDIVTARAVARMQILSELTIPFLKLNGKLLALKAQAVDQELTDAQNALKLLFSQVIENNHYQLPNGDSRYITIVEKKKETPRKYPRKAGTPNKKPL</sequence>
<proteinExistence type="inferred from homology"/>
<protein>
    <recommendedName>
        <fullName evidence="1">Ribosomal RNA small subunit methyltransferase G</fullName>
        <ecNumber evidence="1">2.1.1.-</ecNumber>
    </recommendedName>
    <alternativeName>
        <fullName evidence="1">16S rRNA 7-methylguanosine methyltransferase</fullName>
        <shortName evidence="1">16S rRNA m7G methyltransferase</shortName>
    </alternativeName>
</protein>
<dbReference type="EC" id="2.1.1.-" evidence="1"/>
<dbReference type="EMBL" id="AM946015">
    <property type="protein sequence ID" value="CAR40979.1"/>
    <property type="molecule type" value="Genomic_DNA"/>
</dbReference>
<dbReference type="RefSeq" id="WP_012657909.1">
    <property type="nucleotide sequence ID" value="NC_012004.1"/>
</dbReference>
<dbReference type="SMR" id="B9DTP3"/>
<dbReference type="STRING" id="218495.SUB0373"/>
<dbReference type="GeneID" id="93825677"/>
<dbReference type="KEGG" id="sub:SUB0373"/>
<dbReference type="eggNOG" id="COG0357">
    <property type="taxonomic scope" value="Bacteria"/>
</dbReference>
<dbReference type="HOGENOM" id="CLU_065341_0_2_9"/>
<dbReference type="OrthoDB" id="9808773at2"/>
<dbReference type="Proteomes" id="UP000000449">
    <property type="component" value="Chromosome"/>
</dbReference>
<dbReference type="GO" id="GO:0005829">
    <property type="term" value="C:cytosol"/>
    <property type="evidence" value="ECO:0007669"/>
    <property type="project" value="TreeGrafter"/>
</dbReference>
<dbReference type="GO" id="GO:0070043">
    <property type="term" value="F:rRNA (guanine-N7-)-methyltransferase activity"/>
    <property type="evidence" value="ECO:0007669"/>
    <property type="project" value="UniProtKB-UniRule"/>
</dbReference>
<dbReference type="CDD" id="cd02440">
    <property type="entry name" value="AdoMet_MTases"/>
    <property type="match status" value="1"/>
</dbReference>
<dbReference type="FunFam" id="3.40.50.150:FF:000041">
    <property type="entry name" value="Ribosomal RNA small subunit methyltransferase G"/>
    <property type="match status" value="1"/>
</dbReference>
<dbReference type="Gene3D" id="3.40.50.150">
    <property type="entry name" value="Vaccinia Virus protein VP39"/>
    <property type="match status" value="1"/>
</dbReference>
<dbReference type="HAMAP" id="MF_00074">
    <property type="entry name" value="16SrRNA_methyltr_G"/>
    <property type="match status" value="1"/>
</dbReference>
<dbReference type="InterPro" id="IPR003682">
    <property type="entry name" value="rRNA_ssu_MeTfrase_G"/>
</dbReference>
<dbReference type="InterPro" id="IPR029063">
    <property type="entry name" value="SAM-dependent_MTases_sf"/>
</dbReference>
<dbReference type="NCBIfam" id="TIGR00138">
    <property type="entry name" value="rsmG_gidB"/>
    <property type="match status" value="1"/>
</dbReference>
<dbReference type="PANTHER" id="PTHR31760">
    <property type="entry name" value="S-ADENOSYL-L-METHIONINE-DEPENDENT METHYLTRANSFERASES SUPERFAMILY PROTEIN"/>
    <property type="match status" value="1"/>
</dbReference>
<dbReference type="PANTHER" id="PTHR31760:SF0">
    <property type="entry name" value="S-ADENOSYL-L-METHIONINE-DEPENDENT METHYLTRANSFERASES SUPERFAMILY PROTEIN"/>
    <property type="match status" value="1"/>
</dbReference>
<dbReference type="Pfam" id="PF02527">
    <property type="entry name" value="GidB"/>
    <property type="match status" value="1"/>
</dbReference>
<dbReference type="PIRSF" id="PIRSF003078">
    <property type="entry name" value="GidB"/>
    <property type="match status" value="1"/>
</dbReference>
<dbReference type="SUPFAM" id="SSF53335">
    <property type="entry name" value="S-adenosyl-L-methionine-dependent methyltransferases"/>
    <property type="match status" value="1"/>
</dbReference>
<feature type="chain" id="PRO_1000118202" description="Ribosomal RNA small subunit methyltransferase G">
    <location>
        <begin position="1"/>
        <end position="237"/>
    </location>
</feature>
<feature type="region of interest" description="Disordered" evidence="2">
    <location>
        <begin position="218"/>
        <end position="237"/>
    </location>
</feature>
<feature type="binding site" evidence="1">
    <location>
        <position position="78"/>
    </location>
    <ligand>
        <name>S-adenosyl-L-methionine</name>
        <dbReference type="ChEBI" id="CHEBI:59789"/>
    </ligand>
</feature>
<feature type="binding site" evidence="1">
    <location>
        <position position="83"/>
    </location>
    <ligand>
        <name>S-adenosyl-L-methionine</name>
        <dbReference type="ChEBI" id="CHEBI:59789"/>
    </ligand>
</feature>
<feature type="binding site" evidence="1">
    <location>
        <begin position="129"/>
        <end position="130"/>
    </location>
    <ligand>
        <name>S-adenosyl-L-methionine</name>
        <dbReference type="ChEBI" id="CHEBI:59789"/>
    </ligand>
</feature>
<feature type="binding site" evidence="1">
    <location>
        <position position="148"/>
    </location>
    <ligand>
        <name>S-adenosyl-L-methionine</name>
        <dbReference type="ChEBI" id="CHEBI:59789"/>
    </ligand>
</feature>
<organism>
    <name type="scientific">Streptococcus uberis (strain ATCC BAA-854 / 0140J)</name>
    <dbReference type="NCBI Taxonomy" id="218495"/>
    <lineage>
        <taxon>Bacteria</taxon>
        <taxon>Bacillati</taxon>
        <taxon>Bacillota</taxon>
        <taxon>Bacilli</taxon>
        <taxon>Lactobacillales</taxon>
        <taxon>Streptococcaceae</taxon>
        <taxon>Streptococcus</taxon>
    </lineage>
</organism>
<name>RSMG_STRU0</name>
<accession>B9DTP3</accession>
<keyword id="KW-0963">Cytoplasm</keyword>
<keyword id="KW-0489">Methyltransferase</keyword>
<keyword id="KW-1185">Reference proteome</keyword>
<keyword id="KW-0698">rRNA processing</keyword>
<keyword id="KW-0949">S-adenosyl-L-methionine</keyword>
<keyword id="KW-0808">Transferase</keyword>
<gene>
    <name evidence="1" type="primary">rsmG</name>
    <name type="ordered locus">SUB0373</name>
</gene>
<evidence type="ECO:0000255" key="1">
    <source>
        <dbReference type="HAMAP-Rule" id="MF_00074"/>
    </source>
</evidence>
<evidence type="ECO:0000256" key="2">
    <source>
        <dbReference type="SAM" id="MobiDB-lite"/>
    </source>
</evidence>
<reference key="1">
    <citation type="journal article" date="2009" name="BMC Genomics">
        <title>Evidence for niche adaptation in the genome of the bovine pathogen Streptococcus uberis.</title>
        <authorList>
            <person name="Ward P.N."/>
            <person name="Holden M.T.G."/>
            <person name="Leigh J.A."/>
            <person name="Lennard N."/>
            <person name="Bignell A."/>
            <person name="Barron A."/>
            <person name="Clark L."/>
            <person name="Quail M.A."/>
            <person name="Woodward J."/>
            <person name="Barrell B.G."/>
            <person name="Egan S.A."/>
            <person name="Field T.R."/>
            <person name="Maskell D."/>
            <person name="Kehoe M."/>
            <person name="Dowson C.G."/>
            <person name="Chanter N."/>
            <person name="Whatmore A.M."/>
            <person name="Bentley S.D."/>
            <person name="Parkhill J."/>
        </authorList>
    </citation>
    <scope>NUCLEOTIDE SEQUENCE [LARGE SCALE GENOMIC DNA]</scope>
    <source>
        <strain>ATCC BAA-854 / 0140J</strain>
    </source>
</reference>
<comment type="function">
    <text evidence="1">Specifically methylates the N7 position of a guanine in 16S rRNA.</text>
</comment>
<comment type="subcellular location">
    <subcellularLocation>
        <location evidence="1">Cytoplasm</location>
    </subcellularLocation>
</comment>
<comment type="similarity">
    <text evidence="1">Belongs to the methyltransferase superfamily. RNA methyltransferase RsmG family.</text>
</comment>